<dbReference type="EMBL" id="CR382132">
    <property type="protein sequence ID" value="CAG78327.1"/>
    <property type="molecule type" value="Genomic_DNA"/>
</dbReference>
<dbReference type="RefSeq" id="XP_505518.1">
    <property type="nucleotide sequence ID" value="XM_505518.1"/>
</dbReference>
<dbReference type="SMR" id="Q6C1E4"/>
<dbReference type="STRING" id="284591.Q6C1E4"/>
<dbReference type="EnsemblFungi" id="CAG78327">
    <property type="protein sequence ID" value="CAG78327"/>
    <property type="gene ID" value="YALI0_F17028g"/>
</dbReference>
<dbReference type="KEGG" id="yli:2907826"/>
<dbReference type="VEuPathDB" id="FungiDB:YALI0_F17028g"/>
<dbReference type="HOGENOM" id="CLU_027723_0_0_1"/>
<dbReference type="InParanoid" id="Q6C1E4"/>
<dbReference type="OMA" id="PNDKEWM"/>
<dbReference type="OrthoDB" id="118116at4891"/>
<dbReference type="Proteomes" id="UP000001300">
    <property type="component" value="Chromosome F"/>
</dbReference>
<dbReference type="GO" id="GO:0005886">
    <property type="term" value="C:plasma membrane"/>
    <property type="evidence" value="ECO:0000318"/>
    <property type="project" value="GO_Central"/>
</dbReference>
<dbReference type="GO" id="GO:0071467">
    <property type="term" value="P:cellular response to pH"/>
    <property type="evidence" value="ECO:0000318"/>
    <property type="project" value="GO_Central"/>
</dbReference>
<dbReference type="CDD" id="cd09245">
    <property type="entry name" value="BRO1_UmRIM23-like"/>
    <property type="match status" value="1"/>
</dbReference>
<dbReference type="Gene3D" id="1.25.40.280">
    <property type="entry name" value="alix/aip1 like domains"/>
    <property type="match status" value="1"/>
</dbReference>
<dbReference type="InterPro" id="IPR004328">
    <property type="entry name" value="BRO1_dom"/>
</dbReference>
<dbReference type="InterPro" id="IPR038499">
    <property type="entry name" value="BRO1_sf"/>
</dbReference>
<dbReference type="InterPro" id="IPR037505">
    <property type="entry name" value="pH-resp_palC"/>
</dbReference>
<dbReference type="PANTHER" id="PTHR40463">
    <property type="entry name" value="PH-RESPONSE REGULATOR PROTEIN PALC"/>
    <property type="match status" value="1"/>
</dbReference>
<dbReference type="PANTHER" id="PTHR40463:SF1">
    <property type="entry name" value="PH-RESPONSE REGULATOR PROTEIN PALC"/>
    <property type="match status" value="1"/>
</dbReference>
<dbReference type="Pfam" id="PF03097">
    <property type="entry name" value="BRO1"/>
    <property type="match status" value="1"/>
</dbReference>
<dbReference type="SMART" id="SM01041">
    <property type="entry name" value="BRO1"/>
    <property type="match status" value="1"/>
</dbReference>
<dbReference type="PROSITE" id="PS51180">
    <property type="entry name" value="BRO1"/>
    <property type="match status" value="1"/>
</dbReference>
<gene>
    <name type="ordered locus">YALI0F17028g</name>
</gene>
<organism>
    <name type="scientific">Yarrowia lipolytica (strain CLIB 122 / E 150)</name>
    <name type="common">Yeast</name>
    <name type="synonym">Candida lipolytica</name>
    <dbReference type="NCBI Taxonomy" id="284591"/>
    <lineage>
        <taxon>Eukaryota</taxon>
        <taxon>Fungi</taxon>
        <taxon>Dikarya</taxon>
        <taxon>Ascomycota</taxon>
        <taxon>Saccharomycotina</taxon>
        <taxon>Dipodascomycetes</taxon>
        <taxon>Dipodascales</taxon>
        <taxon>Dipodascales incertae sedis</taxon>
        <taxon>Yarrowia</taxon>
    </lineage>
</organism>
<accession>Q6C1E4</accession>
<feature type="chain" id="PRO_0000218890" description="pH-response regulator protein palC">
    <location>
        <begin position="1"/>
        <end position="441"/>
    </location>
</feature>
<feature type="domain" description="BRO1" evidence="2">
    <location>
        <begin position="3"/>
        <end position="352"/>
    </location>
</feature>
<feature type="region of interest" description="Disordered" evidence="3">
    <location>
        <begin position="278"/>
        <end position="304"/>
    </location>
</feature>
<feature type="region of interest" description="Disordered" evidence="3">
    <location>
        <begin position="414"/>
        <end position="441"/>
    </location>
</feature>
<protein>
    <recommendedName>
        <fullName>pH-response regulator protein palC</fullName>
    </recommendedName>
</protein>
<sequence length="441" mass="48451">MSISYTGQLPTTSPLSLTQLITSDRYQQVIENADAARARVREQLKHAKKTGATEANGDIMPVIKALEEYMPHITSIVDNEGVFRFTSQIITCWRLPFQSQSSMANKTPLHGLSFEYIMVLFTYALALATLANQYVARDKEDRWKHASAYISKARGVVDYLRQCRSFQIICNEPPASVPRDLSSATMSALSHMLCGASHMLILYKCDAETYLDGGAPSAGANSGGFSSSLLLRTAIFARDQFETASALLGEPVSKRKLVTSLVKEKSSKFSLSKKLHLRKDDGSPSLAPVSSFESNRDLSSTSSGTLDSLLSWLSRARGVAEGFVFKHMAIQAYENNQIGKAVGAAYAAILQLEDVKIPQKSALYIPVTHLKETLNRHHADYKADNDRLSFEPVPSPSELAQEWPSGRQVISAQKWTPQTSLDLGEDTSSSAPKYSGQGSYY</sequence>
<keyword id="KW-1185">Reference proteome</keyword>
<proteinExistence type="inferred from homology"/>
<evidence type="ECO:0000250" key="1"/>
<evidence type="ECO:0000255" key="2">
    <source>
        <dbReference type="PROSITE-ProRule" id="PRU00526"/>
    </source>
</evidence>
<evidence type="ECO:0000256" key="3">
    <source>
        <dbReference type="SAM" id="MobiDB-lite"/>
    </source>
</evidence>
<evidence type="ECO:0000305" key="4"/>
<name>PALC_YARLI</name>
<reference key="1">
    <citation type="journal article" date="2004" name="Nature">
        <title>Genome evolution in yeasts.</title>
        <authorList>
            <person name="Dujon B."/>
            <person name="Sherman D."/>
            <person name="Fischer G."/>
            <person name="Durrens P."/>
            <person name="Casaregola S."/>
            <person name="Lafontaine I."/>
            <person name="de Montigny J."/>
            <person name="Marck C."/>
            <person name="Neuveglise C."/>
            <person name="Talla E."/>
            <person name="Goffard N."/>
            <person name="Frangeul L."/>
            <person name="Aigle M."/>
            <person name="Anthouard V."/>
            <person name="Babour A."/>
            <person name="Barbe V."/>
            <person name="Barnay S."/>
            <person name="Blanchin S."/>
            <person name="Beckerich J.-M."/>
            <person name="Beyne E."/>
            <person name="Bleykasten C."/>
            <person name="Boisrame A."/>
            <person name="Boyer J."/>
            <person name="Cattolico L."/>
            <person name="Confanioleri F."/>
            <person name="de Daruvar A."/>
            <person name="Despons L."/>
            <person name="Fabre E."/>
            <person name="Fairhead C."/>
            <person name="Ferry-Dumazet H."/>
            <person name="Groppi A."/>
            <person name="Hantraye F."/>
            <person name="Hennequin C."/>
            <person name="Jauniaux N."/>
            <person name="Joyet P."/>
            <person name="Kachouri R."/>
            <person name="Kerrest A."/>
            <person name="Koszul R."/>
            <person name="Lemaire M."/>
            <person name="Lesur I."/>
            <person name="Ma L."/>
            <person name="Muller H."/>
            <person name="Nicaud J.-M."/>
            <person name="Nikolski M."/>
            <person name="Oztas S."/>
            <person name="Ozier-Kalogeropoulos O."/>
            <person name="Pellenz S."/>
            <person name="Potier S."/>
            <person name="Richard G.-F."/>
            <person name="Straub M.-L."/>
            <person name="Suleau A."/>
            <person name="Swennen D."/>
            <person name="Tekaia F."/>
            <person name="Wesolowski-Louvel M."/>
            <person name="Westhof E."/>
            <person name="Wirth B."/>
            <person name="Zeniou-Meyer M."/>
            <person name="Zivanovic Y."/>
            <person name="Bolotin-Fukuhara M."/>
            <person name="Thierry A."/>
            <person name="Bouchier C."/>
            <person name="Caudron B."/>
            <person name="Scarpelli C."/>
            <person name="Gaillardin C."/>
            <person name="Weissenbach J."/>
            <person name="Wincker P."/>
            <person name="Souciet J.-L."/>
        </authorList>
    </citation>
    <scope>NUCLEOTIDE SEQUENCE [LARGE SCALE GENOMIC DNA]</scope>
    <source>
        <strain>CLIB 122 / E 150</strain>
    </source>
</reference>
<comment type="function">
    <text evidence="1">Required for the proteolytic cleavage of the transcription factor RIM101 in response to alkaline ambient pH.</text>
</comment>
<comment type="similarity">
    <text evidence="4">Belongs to the palC family.</text>
</comment>